<name>RS18_BORAP</name>
<protein>
    <recommendedName>
        <fullName evidence="1">Small ribosomal subunit protein bS18</fullName>
    </recommendedName>
    <alternativeName>
        <fullName evidence="2">30S ribosomal protein S18</fullName>
    </alternativeName>
</protein>
<sequence>MYKDRDVNQRDSRFENQQDGFKKNSNFRFFKRKSCKFCDSGKHPDYKEFDFLKKFITEQGKILPKRITGTSAKHQRRLALEIKRARYMALLPFVKK</sequence>
<organism>
    <name type="scientific">Borreliella afzelii (strain PKo)</name>
    <name type="common">Borrelia afzelii</name>
    <dbReference type="NCBI Taxonomy" id="390236"/>
    <lineage>
        <taxon>Bacteria</taxon>
        <taxon>Pseudomonadati</taxon>
        <taxon>Spirochaetota</taxon>
        <taxon>Spirochaetia</taxon>
        <taxon>Spirochaetales</taxon>
        <taxon>Borreliaceae</taxon>
        <taxon>Borreliella</taxon>
    </lineage>
</organism>
<reference key="1">
    <citation type="journal article" date="2006" name="BMC Genomics">
        <title>Comparative genome analysis: selection pressure on the Borrelia vls cassettes is essential for infectivity.</title>
        <authorList>
            <person name="Gloeckner G."/>
            <person name="Schulte-Spechtel U."/>
            <person name="Schilhabel M."/>
            <person name="Felder M."/>
            <person name="Suehnel J."/>
            <person name="Wilske B."/>
            <person name="Platzer M."/>
        </authorList>
    </citation>
    <scope>NUCLEOTIDE SEQUENCE [LARGE SCALE GENOMIC DNA]</scope>
    <source>
        <strain>PKo</strain>
    </source>
</reference>
<reference key="2">
    <citation type="journal article" date="2011" name="J. Bacteriol.">
        <title>Whole-genome sequences of two Borrelia afzelii and two Borrelia garinii Lyme disease agent isolates.</title>
        <authorList>
            <person name="Casjens S.R."/>
            <person name="Mongodin E.F."/>
            <person name="Qiu W.G."/>
            <person name="Dunn J.J."/>
            <person name="Luft B.J."/>
            <person name="Fraser-Liggett C.M."/>
            <person name="Schutzer S.E."/>
        </authorList>
    </citation>
    <scope>NUCLEOTIDE SEQUENCE [LARGE SCALE GENOMIC DNA]</scope>
    <source>
        <strain>PKo</strain>
    </source>
</reference>
<comment type="function">
    <text evidence="1">Binds as a heterodimer with protein bS6 to the central domain of the 16S rRNA, where it helps stabilize the platform of the 30S subunit.</text>
</comment>
<comment type="subunit">
    <text evidence="1">Part of the 30S ribosomal subunit. Forms a tight heterodimer with protein bS6.</text>
</comment>
<comment type="similarity">
    <text evidence="1">Belongs to the bacterial ribosomal protein bS18 family.</text>
</comment>
<accession>Q0SP51</accession>
<accession>G0IQV8</accession>
<proteinExistence type="inferred from homology"/>
<keyword id="KW-0687">Ribonucleoprotein</keyword>
<keyword id="KW-0689">Ribosomal protein</keyword>
<keyword id="KW-0694">RNA-binding</keyword>
<keyword id="KW-0699">rRNA-binding</keyword>
<gene>
    <name evidence="1" type="primary">rpsR</name>
    <name type="ordered locus">BAPKO_0114</name>
    <name type="ordered locus">BafPKo_0111</name>
</gene>
<feature type="chain" id="PRO_1000003450" description="Small ribosomal subunit protein bS18">
    <location>
        <begin position="1"/>
        <end position="96"/>
    </location>
</feature>
<dbReference type="EMBL" id="CP000395">
    <property type="protein sequence ID" value="ABH01377.1"/>
    <property type="molecule type" value="Genomic_DNA"/>
</dbReference>
<dbReference type="EMBL" id="CP002933">
    <property type="protein sequence ID" value="AEL69344.1"/>
    <property type="molecule type" value="Genomic_DNA"/>
</dbReference>
<dbReference type="RefSeq" id="WP_004790283.1">
    <property type="nucleotide sequence ID" value="NZ_CP160066.1"/>
</dbReference>
<dbReference type="SMR" id="Q0SP51"/>
<dbReference type="STRING" id="29518.BLA32_03725"/>
<dbReference type="GeneID" id="77264955"/>
<dbReference type="KEGG" id="baf:BAPKO_0114"/>
<dbReference type="KEGG" id="bafz:BafPKo_0111"/>
<dbReference type="PATRIC" id="fig|390236.22.peg.110"/>
<dbReference type="eggNOG" id="COG0238">
    <property type="taxonomic scope" value="Bacteria"/>
</dbReference>
<dbReference type="HOGENOM" id="CLU_148710_0_2_12"/>
<dbReference type="OrthoDB" id="9812008at2"/>
<dbReference type="Proteomes" id="UP000005216">
    <property type="component" value="Chromosome"/>
</dbReference>
<dbReference type="GO" id="GO:0022627">
    <property type="term" value="C:cytosolic small ribosomal subunit"/>
    <property type="evidence" value="ECO:0007669"/>
    <property type="project" value="TreeGrafter"/>
</dbReference>
<dbReference type="GO" id="GO:0070181">
    <property type="term" value="F:small ribosomal subunit rRNA binding"/>
    <property type="evidence" value="ECO:0007669"/>
    <property type="project" value="TreeGrafter"/>
</dbReference>
<dbReference type="GO" id="GO:0003735">
    <property type="term" value="F:structural constituent of ribosome"/>
    <property type="evidence" value="ECO:0007669"/>
    <property type="project" value="InterPro"/>
</dbReference>
<dbReference type="GO" id="GO:0006412">
    <property type="term" value="P:translation"/>
    <property type="evidence" value="ECO:0007669"/>
    <property type="project" value="UniProtKB-UniRule"/>
</dbReference>
<dbReference type="Gene3D" id="4.10.640.10">
    <property type="entry name" value="Ribosomal protein S18"/>
    <property type="match status" value="1"/>
</dbReference>
<dbReference type="HAMAP" id="MF_00270">
    <property type="entry name" value="Ribosomal_bS18"/>
    <property type="match status" value="1"/>
</dbReference>
<dbReference type="InterPro" id="IPR001648">
    <property type="entry name" value="Ribosomal_bS18"/>
</dbReference>
<dbReference type="InterPro" id="IPR018275">
    <property type="entry name" value="Ribosomal_bS18_CS"/>
</dbReference>
<dbReference type="InterPro" id="IPR036870">
    <property type="entry name" value="Ribosomal_bS18_sf"/>
</dbReference>
<dbReference type="NCBIfam" id="TIGR00165">
    <property type="entry name" value="S18"/>
    <property type="match status" value="1"/>
</dbReference>
<dbReference type="PANTHER" id="PTHR13479">
    <property type="entry name" value="30S RIBOSOMAL PROTEIN S18"/>
    <property type="match status" value="1"/>
</dbReference>
<dbReference type="PANTHER" id="PTHR13479:SF40">
    <property type="entry name" value="SMALL RIBOSOMAL SUBUNIT PROTEIN BS18M"/>
    <property type="match status" value="1"/>
</dbReference>
<dbReference type="Pfam" id="PF01084">
    <property type="entry name" value="Ribosomal_S18"/>
    <property type="match status" value="1"/>
</dbReference>
<dbReference type="PRINTS" id="PR00974">
    <property type="entry name" value="RIBOSOMALS18"/>
</dbReference>
<dbReference type="SUPFAM" id="SSF46911">
    <property type="entry name" value="Ribosomal protein S18"/>
    <property type="match status" value="1"/>
</dbReference>
<dbReference type="PROSITE" id="PS00057">
    <property type="entry name" value="RIBOSOMAL_S18"/>
    <property type="match status" value="1"/>
</dbReference>
<evidence type="ECO:0000255" key="1">
    <source>
        <dbReference type="HAMAP-Rule" id="MF_00270"/>
    </source>
</evidence>
<evidence type="ECO:0000305" key="2"/>